<accession>Q9L7L9</accession>
<reference key="1">
    <citation type="journal article" date="2003" name="BMC Microbiol.">
        <title>Genomic homogeneity between Mycobacterium avium subsp. avium and Mycobacterium avium subsp. paratuberculosis belies their divergent growth rates.</title>
        <authorList>
            <person name="Bannantine J.P."/>
            <person name="Zhang Q."/>
            <person name="Li L.L."/>
            <person name="Kapur V."/>
        </authorList>
    </citation>
    <scope>NUCLEOTIDE SEQUENCE [GENOMIC DNA]</scope>
    <source>
        <strain>ATCC BAA-968 / K-10</strain>
    </source>
</reference>
<reference key="2">
    <citation type="journal article" date="2005" name="Proc. Natl. Acad. Sci. U.S.A.">
        <title>The complete genome sequence of Mycobacterium avium subspecies paratuberculosis.</title>
        <authorList>
            <person name="Li L."/>
            <person name="Bannantine J.P."/>
            <person name="Zhang Q."/>
            <person name="Amonsin A."/>
            <person name="May B.J."/>
            <person name="Alt D."/>
            <person name="Banerji N."/>
            <person name="Kanjilal S."/>
            <person name="Kapur V."/>
        </authorList>
    </citation>
    <scope>NUCLEOTIDE SEQUENCE [LARGE SCALE GENOMIC DNA]</scope>
    <source>
        <strain>ATCC BAA-968 / K-10</strain>
    </source>
</reference>
<name>RNPA_MYCPA</name>
<evidence type="ECO:0000255" key="1">
    <source>
        <dbReference type="HAMAP-Rule" id="MF_00227"/>
    </source>
</evidence>
<keyword id="KW-0255">Endonuclease</keyword>
<keyword id="KW-0378">Hydrolase</keyword>
<keyword id="KW-0540">Nuclease</keyword>
<keyword id="KW-1185">Reference proteome</keyword>
<keyword id="KW-0694">RNA-binding</keyword>
<keyword id="KW-0819">tRNA processing</keyword>
<comment type="function">
    <text evidence="1">RNaseP catalyzes the removal of the 5'-leader sequence from pre-tRNA to produce the mature 5'-terminus. It can also cleave other RNA substrates such as 4.5S RNA. The protein component plays an auxiliary but essential role in vivo by binding to the 5'-leader sequence and broadening the substrate specificity of the ribozyme.</text>
</comment>
<comment type="catalytic activity">
    <reaction evidence="1">
        <text>Endonucleolytic cleavage of RNA, removing 5'-extranucleotides from tRNA precursor.</text>
        <dbReference type="EC" id="3.1.26.5"/>
    </reaction>
</comment>
<comment type="subunit">
    <text evidence="1">Consists of a catalytic RNA component (M1 or rnpB) and a protein subunit.</text>
</comment>
<comment type="similarity">
    <text evidence="1">Belongs to the RnpA family.</text>
</comment>
<proteinExistence type="inferred from homology"/>
<protein>
    <recommendedName>
        <fullName evidence="1">Ribonuclease P protein component</fullName>
        <shortName evidence="1">RNase P protein</shortName>
        <shortName evidence="1">RNaseP protein</shortName>
        <ecNumber evidence="1">3.1.26.5</ecNumber>
    </recommendedName>
    <alternativeName>
        <fullName evidence="1">Protein C5</fullName>
    </alternativeName>
</protein>
<gene>
    <name evidence="1" type="primary">rnpA</name>
    <name type="ordered locus">MAP_4349c</name>
</gene>
<feature type="chain" id="PRO_0000198490" description="Ribonuclease P protein component">
    <location>
        <begin position="1"/>
        <end position="119"/>
    </location>
</feature>
<organism>
    <name type="scientific">Mycolicibacterium paratuberculosis (strain ATCC BAA-968 / K-10)</name>
    <name type="common">Mycobacterium paratuberculosis</name>
    <dbReference type="NCBI Taxonomy" id="262316"/>
    <lineage>
        <taxon>Bacteria</taxon>
        <taxon>Bacillati</taxon>
        <taxon>Actinomycetota</taxon>
        <taxon>Actinomycetes</taxon>
        <taxon>Mycobacteriales</taxon>
        <taxon>Mycobacteriaceae</taxon>
        <taxon>Mycobacterium</taxon>
        <taxon>Mycobacterium avium complex (MAC)</taxon>
    </lineage>
</organism>
<sequence>MLPARNRMTRSTEFDATVKHGTRMAQPDIVVHLRRGSEPDDESAGPRVGLVVGKAVGTAVQRHRVARRLRHVARPLLGELQPSDRLVIRALPGSRTVSSARLAQELQRCLRRMPAGSGR</sequence>
<dbReference type="EC" id="3.1.26.5" evidence="1"/>
<dbReference type="EMBL" id="AF222789">
    <property type="protein sequence ID" value="AAF33695.1"/>
    <property type="molecule type" value="Genomic_DNA"/>
</dbReference>
<dbReference type="EMBL" id="AE016958">
    <property type="protein sequence ID" value="AAS06899.1"/>
    <property type="molecule type" value="Genomic_DNA"/>
</dbReference>
<dbReference type="RefSeq" id="WP_010950319.1">
    <property type="nucleotide sequence ID" value="NZ_CP106873.1"/>
</dbReference>
<dbReference type="SMR" id="Q9L7L9"/>
<dbReference type="STRING" id="262316.MAP_4349c"/>
<dbReference type="KEGG" id="mpa:MAP_4349c"/>
<dbReference type="eggNOG" id="COG0594">
    <property type="taxonomic scope" value="Bacteria"/>
</dbReference>
<dbReference type="HOGENOM" id="CLU_117179_4_1_11"/>
<dbReference type="Proteomes" id="UP000000580">
    <property type="component" value="Chromosome"/>
</dbReference>
<dbReference type="GO" id="GO:0030677">
    <property type="term" value="C:ribonuclease P complex"/>
    <property type="evidence" value="ECO:0007669"/>
    <property type="project" value="TreeGrafter"/>
</dbReference>
<dbReference type="GO" id="GO:0042781">
    <property type="term" value="F:3'-tRNA processing endoribonuclease activity"/>
    <property type="evidence" value="ECO:0007669"/>
    <property type="project" value="TreeGrafter"/>
</dbReference>
<dbReference type="GO" id="GO:0004526">
    <property type="term" value="F:ribonuclease P activity"/>
    <property type="evidence" value="ECO:0007669"/>
    <property type="project" value="UniProtKB-UniRule"/>
</dbReference>
<dbReference type="GO" id="GO:0000049">
    <property type="term" value="F:tRNA binding"/>
    <property type="evidence" value="ECO:0007669"/>
    <property type="project" value="UniProtKB-UniRule"/>
</dbReference>
<dbReference type="GO" id="GO:0001682">
    <property type="term" value="P:tRNA 5'-leader removal"/>
    <property type="evidence" value="ECO:0007669"/>
    <property type="project" value="UniProtKB-UniRule"/>
</dbReference>
<dbReference type="Gene3D" id="3.30.230.10">
    <property type="match status" value="1"/>
</dbReference>
<dbReference type="HAMAP" id="MF_00227">
    <property type="entry name" value="RNase_P"/>
    <property type="match status" value="1"/>
</dbReference>
<dbReference type="InterPro" id="IPR020568">
    <property type="entry name" value="Ribosomal_Su5_D2-typ_SF"/>
</dbReference>
<dbReference type="InterPro" id="IPR014721">
    <property type="entry name" value="Ribsml_uS5_D2-typ_fold_subgr"/>
</dbReference>
<dbReference type="InterPro" id="IPR000100">
    <property type="entry name" value="RNase_P"/>
</dbReference>
<dbReference type="InterPro" id="IPR020539">
    <property type="entry name" value="RNase_P_CS"/>
</dbReference>
<dbReference type="NCBIfam" id="TIGR00188">
    <property type="entry name" value="rnpA"/>
    <property type="match status" value="1"/>
</dbReference>
<dbReference type="PANTHER" id="PTHR33992">
    <property type="entry name" value="RIBONUCLEASE P PROTEIN COMPONENT"/>
    <property type="match status" value="1"/>
</dbReference>
<dbReference type="PANTHER" id="PTHR33992:SF1">
    <property type="entry name" value="RIBONUCLEASE P PROTEIN COMPONENT"/>
    <property type="match status" value="1"/>
</dbReference>
<dbReference type="Pfam" id="PF00825">
    <property type="entry name" value="Ribonuclease_P"/>
    <property type="match status" value="1"/>
</dbReference>
<dbReference type="SUPFAM" id="SSF54211">
    <property type="entry name" value="Ribosomal protein S5 domain 2-like"/>
    <property type="match status" value="1"/>
</dbReference>
<dbReference type="PROSITE" id="PS00648">
    <property type="entry name" value="RIBONUCLEASE_P"/>
    <property type="match status" value="1"/>
</dbReference>